<evidence type="ECO:0000250" key="1"/>
<evidence type="ECO:0000255" key="2">
    <source>
        <dbReference type="PROSITE-ProRule" id="PRU00441"/>
    </source>
</evidence>
<evidence type="ECO:0000305" key="3"/>
<protein>
    <recommendedName>
        <fullName>Putative 2-aminoethylphosphonate transport system permease protein PhnU</fullName>
    </recommendedName>
</protein>
<name>PHNU_SALCH</name>
<sequence length="286" mass="30872">MSLILPLEKPALNLRPLLWLLLPLLVLATLFFWPLSLIVEQALRGANGEIGLETFRHVVDSKRFVGALLNTLQIAFFATAGCLLLGSAMSLILVFIPFPGSELIGRVVDTFIALPTFLITLAFTFIYGSAGLLNGTLMSLFAFELPPVDFLYSMQGVILAEITVFTPLVMRPLMAALRQIDKSQLEAASILGAHPLRVIGQVIFPAALPALMAGGSLCLLLTTNEFGIVLFIGAKGVNTLPMMVYSKAILESDYTVACMIALINIVLSLGLFSLYRLAASRTGVRS</sequence>
<dbReference type="EMBL" id="AE017220">
    <property type="protein sequence ID" value="AAX64374.1"/>
    <property type="molecule type" value="Genomic_DNA"/>
</dbReference>
<dbReference type="RefSeq" id="WP_001539304.1">
    <property type="nucleotide sequence ID" value="NC_006905.1"/>
</dbReference>
<dbReference type="SMR" id="Q57SD7"/>
<dbReference type="KEGG" id="sec:SCH_0468"/>
<dbReference type="HOGENOM" id="CLU_016047_18_0_6"/>
<dbReference type="Proteomes" id="UP000000538">
    <property type="component" value="Chromosome"/>
</dbReference>
<dbReference type="GO" id="GO:0005886">
    <property type="term" value="C:plasma membrane"/>
    <property type="evidence" value="ECO:0007669"/>
    <property type="project" value="UniProtKB-SubCell"/>
</dbReference>
<dbReference type="GO" id="GO:0033223">
    <property type="term" value="P:2-aminoethylphosphonate transport"/>
    <property type="evidence" value="ECO:0007669"/>
    <property type="project" value="InterPro"/>
</dbReference>
<dbReference type="GO" id="GO:0055085">
    <property type="term" value="P:transmembrane transport"/>
    <property type="evidence" value="ECO:0007669"/>
    <property type="project" value="InterPro"/>
</dbReference>
<dbReference type="CDD" id="cd06261">
    <property type="entry name" value="TM_PBP2"/>
    <property type="match status" value="1"/>
</dbReference>
<dbReference type="Gene3D" id="1.10.3720.10">
    <property type="entry name" value="MetI-like"/>
    <property type="match status" value="1"/>
</dbReference>
<dbReference type="InterPro" id="IPR017636">
    <property type="entry name" value="AminoethylPonate_ABC_perm-PhnU"/>
</dbReference>
<dbReference type="InterPro" id="IPR000515">
    <property type="entry name" value="MetI-like"/>
</dbReference>
<dbReference type="InterPro" id="IPR035906">
    <property type="entry name" value="MetI-like_sf"/>
</dbReference>
<dbReference type="NCBIfam" id="TIGR03226">
    <property type="entry name" value="PhnU"/>
    <property type="match status" value="1"/>
</dbReference>
<dbReference type="NCBIfam" id="NF011624">
    <property type="entry name" value="PRK15050.1"/>
    <property type="match status" value="1"/>
</dbReference>
<dbReference type="PANTHER" id="PTHR43357">
    <property type="entry name" value="INNER MEMBRANE ABC TRANSPORTER PERMEASE PROTEIN YDCV"/>
    <property type="match status" value="1"/>
</dbReference>
<dbReference type="PANTHER" id="PTHR43357:SF4">
    <property type="entry name" value="INNER MEMBRANE ABC TRANSPORTER PERMEASE PROTEIN YDCV"/>
    <property type="match status" value="1"/>
</dbReference>
<dbReference type="Pfam" id="PF00528">
    <property type="entry name" value="BPD_transp_1"/>
    <property type="match status" value="1"/>
</dbReference>
<dbReference type="SUPFAM" id="SSF161098">
    <property type="entry name" value="MetI-like"/>
    <property type="match status" value="1"/>
</dbReference>
<dbReference type="PROSITE" id="PS50928">
    <property type="entry name" value="ABC_TM1"/>
    <property type="match status" value="1"/>
</dbReference>
<comment type="function">
    <text evidence="1">Probably part of the PhnSTUV complex (TC 3.A.1.11.5) involved in 2-aminoethylphosphonate import. Probably responsible for the translocation of the substrate across the membrane (By similarity).</text>
</comment>
<comment type="subcellular location">
    <subcellularLocation>
        <location evidence="3">Cell inner membrane</location>
        <topology evidence="2">Multi-pass membrane protein</topology>
    </subcellularLocation>
</comment>
<comment type="similarity">
    <text evidence="3">Belongs to the binding-protein-dependent transport system permease family.</text>
</comment>
<accession>Q57SD7</accession>
<proteinExistence type="inferred from homology"/>
<keyword id="KW-0997">Cell inner membrane</keyword>
<keyword id="KW-1003">Cell membrane</keyword>
<keyword id="KW-0472">Membrane</keyword>
<keyword id="KW-0812">Transmembrane</keyword>
<keyword id="KW-1133">Transmembrane helix</keyword>
<keyword id="KW-0813">Transport</keyword>
<organism>
    <name type="scientific">Salmonella choleraesuis (strain SC-B67)</name>
    <dbReference type="NCBI Taxonomy" id="321314"/>
    <lineage>
        <taxon>Bacteria</taxon>
        <taxon>Pseudomonadati</taxon>
        <taxon>Pseudomonadota</taxon>
        <taxon>Gammaproteobacteria</taxon>
        <taxon>Enterobacterales</taxon>
        <taxon>Enterobacteriaceae</taxon>
        <taxon>Salmonella</taxon>
    </lineage>
</organism>
<reference key="1">
    <citation type="journal article" date="2005" name="Nucleic Acids Res.">
        <title>The genome sequence of Salmonella enterica serovar Choleraesuis, a highly invasive and resistant zoonotic pathogen.</title>
        <authorList>
            <person name="Chiu C.-H."/>
            <person name="Tang P."/>
            <person name="Chu C."/>
            <person name="Hu S."/>
            <person name="Bao Q."/>
            <person name="Yu J."/>
            <person name="Chou Y.-Y."/>
            <person name="Wang H.-S."/>
            <person name="Lee Y.-S."/>
        </authorList>
    </citation>
    <scope>NUCLEOTIDE SEQUENCE [LARGE SCALE GENOMIC DNA]</scope>
    <source>
        <strain>SC-B67</strain>
    </source>
</reference>
<gene>
    <name type="primary">phnU</name>
    <name type="ordered locus">SCH_0468</name>
</gene>
<feature type="chain" id="PRO_0000286743" description="Putative 2-aminoethylphosphonate transport system permease protein PhnU">
    <location>
        <begin position="1"/>
        <end position="286"/>
    </location>
</feature>
<feature type="transmembrane region" description="Helical" evidence="2">
    <location>
        <begin position="19"/>
        <end position="39"/>
    </location>
</feature>
<feature type="transmembrane region" description="Helical" evidence="2">
    <location>
        <begin position="76"/>
        <end position="96"/>
    </location>
</feature>
<feature type="transmembrane region" description="Helical" evidence="2">
    <location>
        <begin position="111"/>
        <end position="131"/>
    </location>
</feature>
<feature type="transmembrane region" description="Helical" evidence="2">
    <location>
        <begin position="150"/>
        <end position="170"/>
    </location>
</feature>
<feature type="transmembrane region" description="Helical" evidence="2">
    <location>
        <begin position="202"/>
        <end position="222"/>
    </location>
</feature>
<feature type="transmembrane region" description="Helical" evidence="2">
    <location>
        <begin position="254"/>
        <end position="274"/>
    </location>
</feature>
<feature type="domain" description="ABC transmembrane type-1" evidence="2">
    <location>
        <begin position="68"/>
        <end position="275"/>
    </location>
</feature>